<protein>
    <recommendedName>
        <fullName>Phosphosulfolactate synthase</fullName>
        <ecNumber>4.4.1.19</ecNumber>
    </recommendedName>
    <alternativeName>
        <fullName>(2R)-phospho-3-sulfolactate synthase</fullName>
        <shortName>PSL synthase</shortName>
    </alternativeName>
</protein>
<organism>
    <name type="scientific">Bacillus subtilis (strain 168)</name>
    <dbReference type="NCBI Taxonomy" id="224308"/>
    <lineage>
        <taxon>Bacteria</taxon>
        <taxon>Bacillati</taxon>
        <taxon>Bacillota</taxon>
        <taxon>Bacilli</taxon>
        <taxon>Bacillales</taxon>
        <taxon>Bacillaceae</taxon>
        <taxon>Bacillus</taxon>
    </lineage>
</organism>
<gene>
    <name type="primary">yitD</name>
    <name type="ordered locus">BSU10950</name>
</gene>
<keyword id="KW-0002">3D-structure</keyword>
<keyword id="KW-0456">Lyase</keyword>
<keyword id="KW-1185">Reference proteome</keyword>
<evidence type="ECO:0000250" key="1"/>
<evidence type="ECO:0000305" key="2"/>
<evidence type="ECO:0007829" key="3">
    <source>
        <dbReference type="PDB" id="1U83"/>
    </source>
</evidence>
<name>PSLS_BACSU</name>
<reference key="1">
    <citation type="journal article" date="1997" name="Microbiology">
        <title>A Bacillus subtilis chromosome segment at the 100 degrees to 102 degrees position encoding 11 membrane proteins.</title>
        <authorList>
            <person name="Roche B."/>
            <person name="Autret S."/>
            <person name="Levine A."/>
            <person name="Vannier F."/>
            <person name="Medina N."/>
            <person name="Seror S.J."/>
        </authorList>
    </citation>
    <scope>NUCLEOTIDE SEQUENCE [GENOMIC DNA]</scope>
    <source>
        <strain>168</strain>
    </source>
</reference>
<reference key="2">
    <citation type="journal article" date="1997" name="Nature">
        <title>The complete genome sequence of the Gram-positive bacterium Bacillus subtilis.</title>
        <authorList>
            <person name="Kunst F."/>
            <person name="Ogasawara N."/>
            <person name="Moszer I."/>
            <person name="Albertini A.M."/>
            <person name="Alloni G."/>
            <person name="Azevedo V."/>
            <person name="Bertero M.G."/>
            <person name="Bessieres P."/>
            <person name="Bolotin A."/>
            <person name="Borchert S."/>
            <person name="Borriss R."/>
            <person name="Boursier L."/>
            <person name="Brans A."/>
            <person name="Braun M."/>
            <person name="Brignell S.C."/>
            <person name="Bron S."/>
            <person name="Brouillet S."/>
            <person name="Bruschi C.V."/>
            <person name="Caldwell B."/>
            <person name="Capuano V."/>
            <person name="Carter N.M."/>
            <person name="Choi S.-K."/>
            <person name="Codani J.-J."/>
            <person name="Connerton I.F."/>
            <person name="Cummings N.J."/>
            <person name="Daniel R.A."/>
            <person name="Denizot F."/>
            <person name="Devine K.M."/>
            <person name="Duesterhoeft A."/>
            <person name="Ehrlich S.D."/>
            <person name="Emmerson P.T."/>
            <person name="Entian K.-D."/>
            <person name="Errington J."/>
            <person name="Fabret C."/>
            <person name="Ferrari E."/>
            <person name="Foulger D."/>
            <person name="Fritz C."/>
            <person name="Fujita M."/>
            <person name="Fujita Y."/>
            <person name="Fuma S."/>
            <person name="Galizzi A."/>
            <person name="Galleron N."/>
            <person name="Ghim S.-Y."/>
            <person name="Glaser P."/>
            <person name="Goffeau A."/>
            <person name="Golightly E.J."/>
            <person name="Grandi G."/>
            <person name="Guiseppi G."/>
            <person name="Guy B.J."/>
            <person name="Haga K."/>
            <person name="Haiech J."/>
            <person name="Harwood C.R."/>
            <person name="Henaut A."/>
            <person name="Hilbert H."/>
            <person name="Holsappel S."/>
            <person name="Hosono S."/>
            <person name="Hullo M.-F."/>
            <person name="Itaya M."/>
            <person name="Jones L.-M."/>
            <person name="Joris B."/>
            <person name="Karamata D."/>
            <person name="Kasahara Y."/>
            <person name="Klaerr-Blanchard M."/>
            <person name="Klein C."/>
            <person name="Kobayashi Y."/>
            <person name="Koetter P."/>
            <person name="Koningstein G."/>
            <person name="Krogh S."/>
            <person name="Kumano M."/>
            <person name="Kurita K."/>
            <person name="Lapidus A."/>
            <person name="Lardinois S."/>
            <person name="Lauber J."/>
            <person name="Lazarevic V."/>
            <person name="Lee S.-M."/>
            <person name="Levine A."/>
            <person name="Liu H."/>
            <person name="Masuda S."/>
            <person name="Mauel C."/>
            <person name="Medigue C."/>
            <person name="Medina N."/>
            <person name="Mellado R.P."/>
            <person name="Mizuno M."/>
            <person name="Moestl D."/>
            <person name="Nakai S."/>
            <person name="Noback M."/>
            <person name="Noone D."/>
            <person name="O'Reilly M."/>
            <person name="Ogawa K."/>
            <person name="Ogiwara A."/>
            <person name="Oudega B."/>
            <person name="Park S.-H."/>
            <person name="Parro V."/>
            <person name="Pohl T.M."/>
            <person name="Portetelle D."/>
            <person name="Porwollik S."/>
            <person name="Prescott A.M."/>
            <person name="Presecan E."/>
            <person name="Pujic P."/>
            <person name="Purnelle B."/>
            <person name="Rapoport G."/>
            <person name="Rey M."/>
            <person name="Reynolds S."/>
            <person name="Rieger M."/>
            <person name="Rivolta C."/>
            <person name="Rocha E."/>
            <person name="Roche B."/>
            <person name="Rose M."/>
            <person name="Sadaie Y."/>
            <person name="Sato T."/>
            <person name="Scanlan E."/>
            <person name="Schleich S."/>
            <person name="Schroeter R."/>
            <person name="Scoffone F."/>
            <person name="Sekiguchi J."/>
            <person name="Sekowska A."/>
            <person name="Seror S.J."/>
            <person name="Serror P."/>
            <person name="Shin B.-S."/>
            <person name="Soldo B."/>
            <person name="Sorokin A."/>
            <person name="Tacconi E."/>
            <person name="Takagi T."/>
            <person name="Takahashi H."/>
            <person name="Takemaru K."/>
            <person name="Takeuchi M."/>
            <person name="Tamakoshi A."/>
            <person name="Tanaka T."/>
            <person name="Terpstra P."/>
            <person name="Tognoni A."/>
            <person name="Tosato V."/>
            <person name="Uchiyama S."/>
            <person name="Vandenbol M."/>
            <person name="Vannier F."/>
            <person name="Vassarotti A."/>
            <person name="Viari A."/>
            <person name="Wambutt R."/>
            <person name="Wedler E."/>
            <person name="Wedler H."/>
            <person name="Weitzenegger T."/>
            <person name="Winters P."/>
            <person name="Wipat A."/>
            <person name="Yamamoto H."/>
            <person name="Yamane K."/>
            <person name="Yasumoto K."/>
            <person name="Yata K."/>
            <person name="Yoshida K."/>
            <person name="Yoshikawa H.-F."/>
            <person name="Zumstein E."/>
            <person name="Yoshikawa H."/>
            <person name="Danchin A."/>
        </authorList>
    </citation>
    <scope>NUCLEOTIDE SEQUENCE [LARGE SCALE GENOMIC DNA]</scope>
    <source>
        <strain>168</strain>
    </source>
</reference>
<reference key="3">
    <citation type="journal article" date="2001" name="J. Bacteriol.">
        <title>Evidence that a linear megaplasmid encodes enzymes of aliphatic alkene and epoxide metabolism and coenzyme M (2-mercaptoethanesulfonate) biosynthesis in Xanthobacter strain Py2.</title>
        <authorList>
            <person name="Krum J.G."/>
            <person name="Ensign S.A."/>
        </authorList>
    </citation>
    <scope>PROBABLE FUNCTION</scope>
</reference>
<reference key="4">
    <citation type="submission" date="2009-02" db="PDB data bank">
        <title>PSL synthase from Bacillus subtilis.</title>
        <authorList>
            <consortium name="Midwest center for structural genomics (MCSG)"/>
        </authorList>
    </citation>
    <scope>X-RAY CRYSTALLOGRAPHY (2.2 ANGSTROMS)</scope>
</reference>
<accession>O06739</accession>
<proteinExistence type="evidence at protein level"/>
<dbReference type="EC" id="4.4.1.19"/>
<dbReference type="EMBL" id="Y09476">
    <property type="protein sequence ID" value="CAA70659.1"/>
    <property type="molecule type" value="Genomic_DNA"/>
</dbReference>
<dbReference type="EMBL" id="AL009126">
    <property type="protein sequence ID" value="CAB12935.1"/>
    <property type="molecule type" value="Genomic_DNA"/>
</dbReference>
<dbReference type="PIR" id="E69839">
    <property type="entry name" value="E69839"/>
</dbReference>
<dbReference type="RefSeq" id="WP_003233048.1">
    <property type="nucleotide sequence ID" value="NZ_OZ025638.1"/>
</dbReference>
<dbReference type="PDB" id="1U83">
    <property type="method" value="X-ray"/>
    <property type="resolution" value="2.20 A"/>
    <property type="chains" value="A=1-252"/>
</dbReference>
<dbReference type="PDBsum" id="1U83"/>
<dbReference type="SMR" id="O06739"/>
<dbReference type="FunCoup" id="O06739">
    <property type="interactions" value="186"/>
</dbReference>
<dbReference type="STRING" id="224308.BSU10950"/>
<dbReference type="PaxDb" id="224308-BSU10950"/>
<dbReference type="EnsemblBacteria" id="CAB12935">
    <property type="protein sequence ID" value="CAB12935"/>
    <property type="gene ID" value="BSU_10950"/>
</dbReference>
<dbReference type="GeneID" id="939794"/>
<dbReference type="KEGG" id="bsu:BSU10950"/>
<dbReference type="PATRIC" id="fig|224308.179.peg.1177"/>
<dbReference type="eggNOG" id="COG1809">
    <property type="taxonomic scope" value="Bacteria"/>
</dbReference>
<dbReference type="InParanoid" id="O06739"/>
<dbReference type="OrthoDB" id="7809088at2"/>
<dbReference type="PhylomeDB" id="O06739"/>
<dbReference type="BioCyc" id="BSUB:BSU10950-MONOMER"/>
<dbReference type="EvolutionaryTrace" id="O06739"/>
<dbReference type="Proteomes" id="UP000001570">
    <property type="component" value="Chromosome"/>
</dbReference>
<dbReference type="GO" id="GO:0043817">
    <property type="term" value="F:phosphosulfolactate synthase activity"/>
    <property type="evidence" value="ECO:0007669"/>
    <property type="project" value="UniProtKB-EC"/>
</dbReference>
<dbReference type="Gene3D" id="3.20.20.70">
    <property type="entry name" value="Aldolase class I"/>
    <property type="match status" value="1"/>
</dbReference>
<dbReference type="InterPro" id="IPR013785">
    <property type="entry name" value="Aldolase_TIM"/>
</dbReference>
<dbReference type="InterPro" id="IPR003830">
    <property type="entry name" value="ComA_synth"/>
</dbReference>
<dbReference type="InterPro" id="IPR036112">
    <property type="entry name" value="ComA_synth_sf"/>
</dbReference>
<dbReference type="PANTHER" id="PTHR48413">
    <property type="match status" value="1"/>
</dbReference>
<dbReference type="PANTHER" id="PTHR48413:SF1">
    <property type="entry name" value="PROTEIN HEAT-STRESS-ASSOCIATED 32"/>
    <property type="match status" value="1"/>
</dbReference>
<dbReference type="Pfam" id="PF02679">
    <property type="entry name" value="ComA"/>
    <property type="match status" value="1"/>
</dbReference>
<dbReference type="SUPFAM" id="SSF102110">
    <property type="entry name" value="(2r)-phospho-3-sulfolactate synthase ComA"/>
    <property type="match status" value="1"/>
</dbReference>
<comment type="function">
    <text evidence="1">Catalyzes the addition of sulfite to phosphoenolpyruvate (PEP) to yield (2R)-phospho-3-sulfolactate (PSL) (By similarity). Is probably involved in the biosynthesis of L-sulfolactate, which is a major constituent of sporulating cells and mature spores.</text>
</comment>
<comment type="catalytic activity">
    <reaction>
        <text>(2R)-O-phospho-3-sulfolactate = phosphoenolpyruvate + sulfite + H(+)</text>
        <dbReference type="Rhea" id="RHEA:22784"/>
        <dbReference type="ChEBI" id="CHEBI:15378"/>
        <dbReference type="ChEBI" id="CHEBI:15597"/>
        <dbReference type="ChEBI" id="CHEBI:17359"/>
        <dbReference type="ChEBI" id="CHEBI:58702"/>
        <dbReference type="EC" id="4.4.1.19"/>
    </reaction>
</comment>
<comment type="similarity">
    <text evidence="2">Belongs to the phosphosulfolactate synthase family.</text>
</comment>
<feature type="chain" id="PRO_0000080832" description="Phosphosulfolactate synthase">
    <location>
        <begin position="1"/>
        <end position="252"/>
    </location>
</feature>
<feature type="strand" evidence="3">
    <location>
        <begin position="17"/>
        <end position="19"/>
    </location>
</feature>
<feature type="strand" evidence="3">
    <location>
        <begin position="21"/>
        <end position="27"/>
    </location>
</feature>
<feature type="helix" evidence="3">
    <location>
        <begin position="30"/>
        <end position="40"/>
    </location>
</feature>
<feature type="helix" evidence="3">
    <location>
        <begin position="41"/>
        <end position="43"/>
    </location>
</feature>
<feature type="strand" evidence="3">
    <location>
        <begin position="46"/>
        <end position="49"/>
    </location>
</feature>
<feature type="helix" evidence="3">
    <location>
        <begin position="53"/>
        <end position="56"/>
    </location>
</feature>
<feature type="helix" evidence="3">
    <location>
        <begin position="60"/>
        <end position="69"/>
    </location>
</feature>
<feature type="strand" evidence="3">
    <location>
        <begin position="73"/>
        <end position="76"/>
    </location>
</feature>
<feature type="helix" evidence="3">
    <location>
        <begin position="78"/>
        <end position="86"/>
    </location>
</feature>
<feature type="helix" evidence="3">
    <location>
        <begin position="90"/>
        <end position="99"/>
    </location>
</feature>
<feature type="strand" evidence="3">
    <location>
        <begin position="103"/>
        <end position="107"/>
    </location>
</feature>
<feature type="strand" evidence="3">
    <location>
        <begin position="110"/>
        <end position="112"/>
    </location>
</feature>
<feature type="helix" evidence="3">
    <location>
        <begin position="116"/>
        <end position="126"/>
    </location>
</feature>
<feature type="turn" evidence="3">
    <location>
        <begin position="127"/>
        <end position="129"/>
    </location>
</feature>
<feature type="strand" evidence="3">
    <location>
        <begin position="130"/>
        <end position="135"/>
    </location>
</feature>
<feature type="helix" evidence="3">
    <location>
        <begin position="151"/>
        <end position="162"/>
    </location>
</feature>
<feature type="strand" evidence="3">
    <location>
        <begin position="164"/>
        <end position="169"/>
    </location>
</feature>
<feature type="helix" evidence="3">
    <location>
        <begin position="191"/>
        <end position="195"/>
    </location>
</feature>
<feature type="turn" evidence="3">
    <location>
        <begin position="196"/>
        <end position="198"/>
    </location>
</feature>
<feature type="helix" evidence="3">
    <location>
        <begin position="201"/>
        <end position="203"/>
    </location>
</feature>
<feature type="strand" evidence="3">
    <location>
        <begin position="204"/>
        <end position="207"/>
    </location>
</feature>
<feature type="helix" evidence="3">
    <location>
        <begin position="211"/>
        <end position="221"/>
    </location>
</feature>
<feature type="strand" evidence="3">
    <location>
        <begin position="227"/>
        <end position="231"/>
    </location>
</feature>
<feature type="helix" evidence="3">
    <location>
        <begin position="232"/>
        <end position="234"/>
    </location>
</feature>
<feature type="helix" evidence="3">
    <location>
        <begin position="235"/>
        <end position="242"/>
    </location>
</feature>
<feature type="helix" evidence="3">
    <location>
        <begin position="247"/>
        <end position="249"/>
    </location>
</feature>
<sequence>MNDFSLELPVRTNKPRETGQSILIDNGYPLQFFKDAIAGASDYIDFVKFGWGTSLLTKDLEEKISTLKEHDITFFFGGTLFEKYVSQKKVNEFHRYCTYFGCEYIEISNGTLPMTNKEKAAYIADFSDEFLVLSEVGSKDAELASRQSSEEWLEYIVEDMEAGAEKVITEARESGTGGICSSSGDVRFQIVDDIISSDIDINRLIFEAPNKTLQQGFIQKIGPNVNLANIPFHDAIALETLRLGLRSDTFFL</sequence>